<comment type="function">
    <text evidence="1">Catalyzes the proton-dependent transport of sialic acid.</text>
</comment>
<comment type="catalytic activity">
    <reaction evidence="1">
        <text>N-acetylneuraminate(in) + H(+)(in) = N-acetylneuraminate(out) + H(+)(out)</text>
        <dbReference type="Rhea" id="RHEA:28987"/>
        <dbReference type="ChEBI" id="CHEBI:15378"/>
        <dbReference type="ChEBI" id="CHEBI:35418"/>
    </reaction>
</comment>
<comment type="subcellular location">
    <subcellularLocation>
        <location evidence="1">Cell inner membrane</location>
        <topology evidence="1">Multi-pass membrane protein</topology>
    </subcellularLocation>
</comment>
<comment type="similarity">
    <text evidence="1">Belongs to the major facilitator superfamily. Sialate:H(+) symporter (SHS) (TC 2.A.1.12) family.</text>
</comment>
<feature type="chain" id="PRO_1000214071" description="Sialic acid transporter NanT">
    <location>
        <begin position="1"/>
        <end position="510"/>
    </location>
</feature>
<feature type="transmembrane region" description="Helical" evidence="1">
    <location>
        <begin position="35"/>
        <end position="55"/>
    </location>
</feature>
<feature type="transmembrane region" description="Helical" evidence="1">
    <location>
        <begin position="72"/>
        <end position="92"/>
    </location>
</feature>
<feature type="transmembrane region" description="Helical" evidence="1">
    <location>
        <begin position="99"/>
        <end position="119"/>
    </location>
</feature>
<feature type="transmembrane region" description="Helical" evidence="1">
    <location>
        <begin position="120"/>
        <end position="140"/>
    </location>
</feature>
<feature type="transmembrane region" description="Helical" evidence="1">
    <location>
        <begin position="158"/>
        <end position="178"/>
    </location>
</feature>
<feature type="transmembrane region" description="Helical" evidence="1">
    <location>
        <begin position="180"/>
        <end position="200"/>
    </location>
</feature>
<feature type="transmembrane region" description="Helical" evidence="1">
    <location>
        <begin position="240"/>
        <end position="260"/>
    </location>
</feature>
<feature type="transmembrane region" description="Helical" evidence="1">
    <location>
        <begin position="262"/>
        <end position="282"/>
    </location>
</feature>
<feature type="transmembrane region" description="Helical" evidence="1">
    <location>
        <begin position="295"/>
        <end position="315"/>
    </location>
</feature>
<feature type="transmembrane region" description="Helical" evidence="1">
    <location>
        <begin position="330"/>
        <end position="350"/>
    </location>
</feature>
<feature type="transmembrane region" description="Helical" evidence="1">
    <location>
        <begin position="371"/>
        <end position="391"/>
    </location>
</feature>
<feature type="transmembrane region" description="Helical" evidence="1">
    <location>
        <begin position="392"/>
        <end position="412"/>
    </location>
</feature>
<feature type="transmembrane region" description="Helical" evidence="1">
    <location>
        <begin position="418"/>
        <end position="438"/>
    </location>
</feature>
<feature type="transmembrane region" description="Helical" evidence="1">
    <location>
        <begin position="449"/>
        <end position="469"/>
    </location>
</feature>
<name>NANT_YERPA</name>
<gene>
    <name evidence="1" type="primary">nanT</name>
    <name type="ordered locus">YPA_2205</name>
</gene>
<accession>Q1C5V2</accession>
<protein>
    <recommendedName>
        <fullName evidence="1">Sialic acid transporter NanT</fullName>
    </recommendedName>
    <alternativeName>
        <fullName evidence="1">Sialic acid permease</fullName>
    </alternativeName>
    <alternativeName>
        <fullName evidence="1">Sialic acid/H(+) symporter</fullName>
    </alternativeName>
</protein>
<keyword id="KW-0997">Cell inner membrane</keyword>
<keyword id="KW-1003">Cell membrane</keyword>
<keyword id="KW-0472">Membrane</keyword>
<keyword id="KW-0762">Sugar transport</keyword>
<keyword id="KW-0812">Transmembrane</keyword>
<keyword id="KW-1133">Transmembrane helix</keyword>
<keyword id="KW-0813">Transport</keyword>
<evidence type="ECO:0000255" key="1">
    <source>
        <dbReference type="HAMAP-Rule" id="MF_01238"/>
    </source>
</evidence>
<sequence>MSISVGPSREDKPLSGGAKPPRWYKQLTPAQWKAFVAAWIGYALDGFDFVLITLVLTDIKQEFGLTLIQATSLISAAFISRWFGGLVLGAMGDRYGRKLAMITSIVLFSFGTLACGLAPGYTTLFIARLIIGIGMAGEYGSSSTYVMESWPKNMRNKASGFLISGFSIGAVLAAQAYSYVVLAFGWRMLFYIGLLPIIFALWLRKNLPEAEDWEKAQSKQKKGKQVTDRNMVDILYRSHLSYLNIGLTIFAAVSLYLCFTGMVSTLLVVVLGILCAAIFIYFMVQTSGDRWPTGVMLMVVVFCAFLYSWPIQALLPTYLKMDLGYDPHTVGNILFFSGFGAAVGCCVGGFLGDWLGTRKAYVTSLLISQLLIIPLFAIQGSSILFLGGLLFLQQMLGQGIAGLLPKLLGGYFDTEQRAAGLGFTYNVGALGGALAPILGASIAQHLSLGTALGSLSFSLTFVVILLIGFDMPSRVQRWVRPSGLRMVDAIDGKPFSGAITAQHARVVTQK</sequence>
<reference key="1">
    <citation type="journal article" date="2006" name="J. Bacteriol.">
        <title>Complete genome sequence of Yersinia pestis strains Antiqua and Nepal516: evidence of gene reduction in an emerging pathogen.</title>
        <authorList>
            <person name="Chain P.S.G."/>
            <person name="Hu P."/>
            <person name="Malfatti S.A."/>
            <person name="Radnedge L."/>
            <person name="Larimer F."/>
            <person name="Vergez L.M."/>
            <person name="Worsham P."/>
            <person name="Chu M.C."/>
            <person name="Andersen G.L."/>
        </authorList>
    </citation>
    <scope>NUCLEOTIDE SEQUENCE [LARGE SCALE GENOMIC DNA]</scope>
    <source>
        <strain>Antiqua</strain>
    </source>
</reference>
<dbReference type="EMBL" id="CP000308">
    <property type="protein sequence ID" value="ABG14170.1"/>
    <property type="molecule type" value="Genomic_DNA"/>
</dbReference>
<dbReference type="RefSeq" id="WP_002208513.1">
    <property type="nucleotide sequence ID" value="NZ_CP009906.1"/>
</dbReference>
<dbReference type="SMR" id="Q1C5V2"/>
<dbReference type="KEGG" id="ypa:YPA_2205"/>
<dbReference type="Proteomes" id="UP000001971">
    <property type="component" value="Chromosome"/>
</dbReference>
<dbReference type="GO" id="GO:0005886">
    <property type="term" value="C:plasma membrane"/>
    <property type="evidence" value="ECO:0007669"/>
    <property type="project" value="UniProtKB-SubCell"/>
</dbReference>
<dbReference type="GO" id="GO:0046943">
    <property type="term" value="F:carboxylic acid transmembrane transporter activity"/>
    <property type="evidence" value="ECO:0007669"/>
    <property type="project" value="TreeGrafter"/>
</dbReference>
<dbReference type="GO" id="GO:0015538">
    <property type="term" value="F:sialic acid:proton symporter activity"/>
    <property type="evidence" value="ECO:0007669"/>
    <property type="project" value="UniProtKB-UniRule"/>
</dbReference>
<dbReference type="CDD" id="cd17316">
    <property type="entry name" value="MFS_SV2_like"/>
    <property type="match status" value="1"/>
</dbReference>
<dbReference type="FunFam" id="1.20.1250.20:FF:000027">
    <property type="entry name" value="Sialic acid transporter NanT"/>
    <property type="match status" value="1"/>
</dbReference>
<dbReference type="FunFam" id="1.20.1250.20:FF:000038">
    <property type="entry name" value="Sialic acid transporter NanT"/>
    <property type="match status" value="1"/>
</dbReference>
<dbReference type="Gene3D" id="1.20.1250.20">
    <property type="entry name" value="MFS general substrate transporter like domains"/>
    <property type="match status" value="2"/>
</dbReference>
<dbReference type="HAMAP" id="MF_01238">
    <property type="entry name" value="MFS_NanT"/>
    <property type="match status" value="1"/>
</dbReference>
<dbReference type="InterPro" id="IPR011701">
    <property type="entry name" value="MFS"/>
</dbReference>
<dbReference type="InterPro" id="IPR020846">
    <property type="entry name" value="MFS_dom"/>
</dbReference>
<dbReference type="InterPro" id="IPR036259">
    <property type="entry name" value="MFS_trans_sf"/>
</dbReference>
<dbReference type="InterPro" id="IPR004742">
    <property type="entry name" value="SA_transporter"/>
</dbReference>
<dbReference type="NCBIfam" id="NF003024">
    <property type="entry name" value="PRK03893.1"/>
    <property type="match status" value="1"/>
</dbReference>
<dbReference type="PANTHER" id="PTHR23508">
    <property type="entry name" value="CARBOXYLIC ACID TRANSPORTER PROTEIN HOMOLOG"/>
    <property type="match status" value="1"/>
</dbReference>
<dbReference type="PANTHER" id="PTHR23508:SF3">
    <property type="entry name" value="SIALIC ACID TRANSPORTER NANT"/>
    <property type="match status" value="1"/>
</dbReference>
<dbReference type="Pfam" id="PF07690">
    <property type="entry name" value="MFS_1"/>
    <property type="match status" value="1"/>
</dbReference>
<dbReference type="SUPFAM" id="SSF103473">
    <property type="entry name" value="MFS general substrate transporter"/>
    <property type="match status" value="1"/>
</dbReference>
<dbReference type="PROSITE" id="PS50850">
    <property type="entry name" value="MFS"/>
    <property type="match status" value="1"/>
</dbReference>
<proteinExistence type="inferred from homology"/>
<organism>
    <name type="scientific">Yersinia pestis bv. Antiqua (strain Antiqua)</name>
    <dbReference type="NCBI Taxonomy" id="360102"/>
    <lineage>
        <taxon>Bacteria</taxon>
        <taxon>Pseudomonadati</taxon>
        <taxon>Pseudomonadota</taxon>
        <taxon>Gammaproteobacteria</taxon>
        <taxon>Enterobacterales</taxon>
        <taxon>Yersiniaceae</taxon>
        <taxon>Yersinia</taxon>
    </lineage>
</organism>